<reference key="1">
    <citation type="journal article" date="1987" name="J. Bacteriol.">
        <title>Identification and characterization of the Rhizobium meliloti ntrC gene: R. meliloti has separate regulatory pathways for activation of nitrogen fixation genes in free-living and symbiotic cells.</title>
        <authorList>
            <person name="Szeto W.W."/>
            <person name="Nixon B.T."/>
            <person name="Ronson C.W."/>
            <person name="Ausubel F.M."/>
        </authorList>
    </citation>
    <scope>NUCLEOTIDE SEQUENCE [GENOMIC DNA]</scope>
</reference>
<reference key="2">
    <citation type="journal article" date="2001" name="Proc. Natl. Acad. Sci. U.S.A.">
        <title>Analysis of the chromosome sequence of the legume symbiont Sinorhizobium meliloti strain 1021.</title>
        <authorList>
            <person name="Capela D."/>
            <person name="Barloy-Hubler F."/>
            <person name="Gouzy J."/>
            <person name="Bothe G."/>
            <person name="Ampe F."/>
            <person name="Batut J."/>
            <person name="Boistard P."/>
            <person name="Becker A."/>
            <person name="Boutry M."/>
            <person name="Cadieu E."/>
            <person name="Dreano S."/>
            <person name="Gloux S."/>
            <person name="Godrie T."/>
            <person name="Goffeau A."/>
            <person name="Kahn D."/>
            <person name="Kiss E."/>
            <person name="Lelaure V."/>
            <person name="Masuy D."/>
            <person name="Pohl T."/>
            <person name="Portetelle D."/>
            <person name="Puehler A."/>
            <person name="Purnelle B."/>
            <person name="Ramsperger U."/>
            <person name="Renard C."/>
            <person name="Thebault P."/>
            <person name="Vandenbol M."/>
            <person name="Weidner S."/>
            <person name="Galibert F."/>
        </authorList>
    </citation>
    <scope>NUCLEOTIDE SEQUENCE [LARGE SCALE GENOMIC DNA]</scope>
    <source>
        <strain>1021</strain>
    </source>
</reference>
<reference key="3">
    <citation type="journal article" date="2001" name="Science">
        <title>The composite genome of the legume symbiont Sinorhizobium meliloti.</title>
        <authorList>
            <person name="Galibert F."/>
            <person name="Finan T.M."/>
            <person name="Long S.R."/>
            <person name="Puehler A."/>
            <person name="Abola P."/>
            <person name="Ampe F."/>
            <person name="Barloy-Hubler F."/>
            <person name="Barnett M.J."/>
            <person name="Becker A."/>
            <person name="Boistard P."/>
            <person name="Bothe G."/>
            <person name="Boutry M."/>
            <person name="Bowser L."/>
            <person name="Buhrmester J."/>
            <person name="Cadieu E."/>
            <person name="Capela D."/>
            <person name="Chain P."/>
            <person name="Cowie A."/>
            <person name="Davis R.W."/>
            <person name="Dreano S."/>
            <person name="Federspiel N.A."/>
            <person name="Fisher R.F."/>
            <person name="Gloux S."/>
            <person name="Godrie T."/>
            <person name="Goffeau A."/>
            <person name="Golding B."/>
            <person name="Gouzy J."/>
            <person name="Gurjal M."/>
            <person name="Hernandez-Lucas I."/>
            <person name="Hong A."/>
            <person name="Huizar L."/>
            <person name="Hyman R.W."/>
            <person name="Jones T."/>
            <person name="Kahn D."/>
            <person name="Kahn M.L."/>
            <person name="Kalman S."/>
            <person name="Keating D.H."/>
            <person name="Kiss E."/>
            <person name="Komp C."/>
            <person name="Lelaure V."/>
            <person name="Masuy D."/>
            <person name="Palm C."/>
            <person name="Peck M.C."/>
            <person name="Pohl T.M."/>
            <person name="Portetelle D."/>
            <person name="Purnelle B."/>
            <person name="Ramsperger U."/>
            <person name="Surzycki R."/>
            <person name="Thebault P."/>
            <person name="Vandenbol M."/>
            <person name="Vorhoelter F.J."/>
            <person name="Weidner S."/>
            <person name="Wells D.H."/>
            <person name="Wong K."/>
            <person name="Yeh K.-C."/>
            <person name="Batut J."/>
        </authorList>
    </citation>
    <scope>NUCLEOTIDE SEQUENCE [LARGE SCALE GENOMIC DNA]</scope>
    <source>
        <strain>1021</strain>
    </source>
</reference>
<reference key="4">
    <citation type="journal article" date="1993" name="J. Bacteriol.">
        <title>Symbiotic nitrogen fixation by a nifA deletion mutant of Rhizobium meliloti: the role of an unusual ntrC allele.</title>
        <authorList>
            <person name="Labes M."/>
            <person name="Rastogi V."/>
            <person name="Watson R."/>
            <person name="Finan T.M."/>
        </authorList>
    </citation>
    <scope>NUCLEOTIDE SEQUENCE [GENOMIC DNA] OF 452-484</scope>
    <scope>MUTAGENESIS OF ASN-464</scope>
</reference>
<dbReference type="EMBL" id="M15810">
    <property type="protein sequence ID" value="AAA26346.1"/>
    <property type="molecule type" value="Genomic_DNA"/>
</dbReference>
<dbReference type="EMBL" id="AL591688">
    <property type="protein sequence ID" value="CAC46038.1"/>
    <property type="molecule type" value="Genomic_DNA"/>
</dbReference>
<dbReference type="EMBL" id="S59667">
    <property type="protein sequence ID" value="AAB26386.1"/>
    <property type="molecule type" value="Genomic_DNA"/>
</dbReference>
<dbReference type="PIR" id="A26934">
    <property type="entry name" value="A26934"/>
</dbReference>
<dbReference type="RefSeq" id="NP_385565.1">
    <property type="nucleotide sequence ID" value="NC_003047.1"/>
</dbReference>
<dbReference type="RefSeq" id="WP_003535443.1">
    <property type="nucleotide sequence ID" value="NC_003047.1"/>
</dbReference>
<dbReference type="SMR" id="P10577"/>
<dbReference type="EnsemblBacteria" id="CAC46038">
    <property type="protein sequence ID" value="CAC46038"/>
    <property type="gene ID" value="SMc01043"/>
</dbReference>
<dbReference type="KEGG" id="sme:SMc01043"/>
<dbReference type="PATRIC" id="fig|266834.11.peg.2878"/>
<dbReference type="eggNOG" id="COG2204">
    <property type="taxonomic scope" value="Bacteria"/>
</dbReference>
<dbReference type="HOGENOM" id="CLU_000445_0_1_5"/>
<dbReference type="OrthoDB" id="9802388at2"/>
<dbReference type="Proteomes" id="UP000001976">
    <property type="component" value="Chromosome"/>
</dbReference>
<dbReference type="GO" id="GO:0005737">
    <property type="term" value="C:cytoplasm"/>
    <property type="evidence" value="ECO:0007669"/>
    <property type="project" value="UniProtKB-SubCell"/>
</dbReference>
<dbReference type="GO" id="GO:0005524">
    <property type="term" value="F:ATP binding"/>
    <property type="evidence" value="ECO:0007669"/>
    <property type="project" value="UniProtKB-KW"/>
</dbReference>
<dbReference type="GO" id="GO:0016887">
    <property type="term" value="F:ATP hydrolysis activity"/>
    <property type="evidence" value="ECO:0007669"/>
    <property type="project" value="InterPro"/>
</dbReference>
<dbReference type="GO" id="GO:0000156">
    <property type="term" value="F:phosphorelay response regulator activity"/>
    <property type="evidence" value="ECO:0007669"/>
    <property type="project" value="InterPro"/>
</dbReference>
<dbReference type="GO" id="GO:0043565">
    <property type="term" value="F:sequence-specific DNA binding"/>
    <property type="evidence" value="ECO:0007669"/>
    <property type="project" value="InterPro"/>
</dbReference>
<dbReference type="GO" id="GO:0009399">
    <property type="term" value="P:nitrogen fixation"/>
    <property type="evidence" value="ECO:0007669"/>
    <property type="project" value="UniProtKB-KW"/>
</dbReference>
<dbReference type="GO" id="GO:0006355">
    <property type="term" value="P:regulation of DNA-templated transcription"/>
    <property type="evidence" value="ECO:0007669"/>
    <property type="project" value="InterPro"/>
</dbReference>
<dbReference type="GO" id="GO:0006808">
    <property type="term" value="P:regulation of nitrogen utilization"/>
    <property type="evidence" value="ECO:0007669"/>
    <property type="project" value="InterPro"/>
</dbReference>
<dbReference type="CDD" id="cd00009">
    <property type="entry name" value="AAA"/>
    <property type="match status" value="1"/>
</dbReference>
<dbReference type="CDD" id="cd19928">
    <property type="entry name" value="REC_RcNtrC-like"/>
    <property type="match status" value="1"/>
</dbReference>
<dbReference type="FunFam" id="3.40.50.300:FF:000006">
    <property type="entry name" value="DNA-binding transcriptional regulator NtrC"/>
    <property type="match status" value="1"/>
</dbReference>
<dbReference type="Gene3D" id="1.10.8.60">
    <property type="match status" value="1"/>
</dbReference>
<dbReference type="Gene3D" id="3.40.50.2300">
    <property type="match status" value="1"/>
</dbReference>
<dbReference type="Gene3D" id="1.10.10.60">
    <property type="entry name" value="Homeodomain-like"/>
    <property type="match status" value="1"/>
</dbReference>
<dbReference type="Gene3D" id="3.40.50.300">
    <property type="entry name" value="P-loop containing nucleotide triphosphate hydrolases"/>
    <property type="match status" value="1"/>
</dbReference>
<dbReference type="InterPro" id="IPR003593">
    <property type="entry name" value="AAA+_ATPase"/>
</dbReference>
<dbReference type="InterPro" id="IPR011006">
    <property type="entry name" value="CheY-like_superfamily"/>
</dbReference>
<dbReference type="InterPro" id="IPR009057">
    <property type="entry name" value="Homeodomain-like_sf"/>
</dbReference>
<dbReference type="InterPro" id="IPR002197">
    <property type="entry name" value="HTH_Fis"/>
</dbReference>
<dbReference type="InterPro" id="IPR027417">
    <property type="entry name" value="P-loop_NTPase"/>
</dbReference>
<dbReference type="InterPro" id="IPR001789">
    <property type="entry name" value="Sig_transdc_resp-reg_receiver"/>
</dbReference>
<dbReference type="InterPro" id="IPR002078">
    <property type="entry name" value="Sigma_54_int"/>
</dbReference>
<dbReference type="InterPro" id="IPR025662">
    <property type="entry name" value="Sigma_54_int_dom_ATP-bd_1"/>
</dbReference>
<dbReference type="InterPro" id="IPR025943">
    <property type="entry name" value="Sigma_54_int_dom_ATP-bd_2"/>
</dbReference>
<dbReference type="InterPro" id="IPR025944">
    <property type="entry name" value="Sigma_54_int_dom_CS"/>
</dbReference>
<dbReference type="InterPro" id="IPR010114">
    <property type="entry name" value="Transcript_reg_NtrC"/>
</dbReference>
<dbReference type="NCBIfam" id="TIGR01818">
    <property type="entry name" value="ntrC"/>
    <property type="match status" value="1"/>
</dbReference>
<dbReference type="PANTHER" id="PTHR32071:SF95">
    <property type="entry name" value="DNA-BINDING TRANSCRIPTIONAL REGULATOR NTRC"/>
    <property type="match status" value="1"/>
</dbReference>
<dbReference type="PANTHER" id="PTHR32071">
    <property type="entry name" value="TRANSCRIPTIONAL REGULATORY PROTEIN"/>
    <property type="match status" value="1"/>
</dbReference>
<dbReference type="Pfam" id="PF02954">
    <property type="entry name" value="HTH_8"/>
    <property type="match status" value="1"/>
</dbReference>
<dbReference type="Pfam" id="PF00072">
    <property type="entry name" value="Response_reg"/>
    <property type="match status" value="1"/>
</dbReference>
<dbReference type="Pfam" id="PF00158">
    <property type="entry name" value="Sigma54_activat"/>
    <property type="match status" value="1"/>
</dbReference>
<dbReference type="PRINTS" id="PR01590">
    <property type="entry name" value="HTHFIS"/>
</dbReference>
<dbReference type="SMART" id="SM00382">
    <property type="entry name" value="AAA"/>
    <property type="match status" value="1"/>
</dbReference>
<dbReference type="SMART" id="SM00448">
    <property type="entry name" value="REC"/>
    <property type="match status" value="1"/>
</dbReference>
<dbReference type="SUPFAM" id="SSF52172">
    <property type="entry name" value="CheY-like"/>
    <property type="match status" value="1"/>
</dbReference>
<dbReference type="SUPFAM" id="SSF46689">
    <property type="entry name" value="Homeodomain-like"/>
    <property type="match status" value="1"/>
</dbReference>
<dbReference type="SUPFAM" id="SSF52540">
    <property type="entry name" value="P-loop containing nucleoside triphosphate hydrolases"/>
    <property type="match status" value="1"/>
</dbReference>
<dbReference type="PROSITE" id="PS50110">
    <property type="entry name" value="RESPONSE_REGULATORY"/>
    <property type="match status" value="1"/>
</dbReference>
<dbReference type="PROSITE" id="PS00675">
    <property type="entry name" value="SIGMA54_INTERACT_1"/>
    <property type="match status" value="1"/>
</dbReference>
<dbReference type="PROSITE" id="PS00676">
    <property type="entry name" value="SIGMA54_INTERACT_2"/>
    <property type="match status" value="1"/>
</dbReference>
<dbReference type="PROSITE" id="PS00688">
    <property type="entry name" value="SIGMA54_INTERACT_3"/>
    <property type="match status" value="1"/>
</dbReference>
<dbReference type="PROSITE" id="PS50045">
    <property type="entry name" value="SIGMA54_INTERACT_4"/>
    <property type="match status" value="1"/>
</dbReference>
<accession>P10577</accession>
<accession>Q53315</accession>
<comment type="function">
    <text evidence="2">Member of the two-component regulatory system NtrB/NtrC, which controls expression of the nitrogen-regulated (ntr) genes in response to nitrogen limitation. Phosphorylated NtrC binds directly to DNA and stimulates the formation of open promoter-sigma54-RNA polymerase complexes.</text>
</comment>
<comment type="subcellular location">
    <subcellularLocation>
        <location evidence="2">Cytoplasm</location>
    </subcellularLocation>
</comment>
<comment type="PTM">
    <text evidence="2">Phosphorylated and dephosphorylated by NtrB.</text>
</comment>
<evidence type="ECO:0000250" key="1"/>
<evidence type="ECO:0000250" key="2">
    <source>
        <dbReference type="UniProtKB" id="P0AFB8"/>
    </source>
</evidence>
<evidence type="ECO:0000255" key="3">
    <source>
        <dbReference type="PROSITE-ProRule" id="PRU00169"/>
    </source>
</evidence>
<evidence type="ECO:0000255" key="4">
    <source>
        <dbReference type="PROSITE-ProRule" id="PRU00193"/>
    </source>
</evidence>
<evidence type="ECO:0000269" key="5">
    <source>
    </source>
</evidence>
<evidence type="ECO:0000305" key="6"/>
<organism>
    <name type="scientific">Rhizobium meliloti (strain 1021)</name>
    <name type="common">Ensifer meliloti</name>
    <name type="synonym">Sinorhizobium meliloti</name>
    <dbReference type="NCBI Taxonomy" id="266834"/>
    <lineage>
        <taxon>Bacteria</taxon>
        <taxon>Pseudomonadati</taxon>
        <taxon>Pseudomonadota</taxon>
        <taxon>Alphaproteobacteria</taxon>
        <taxon>Hyphomicrobiales</taxon>
        <taxon>Rhizobiaceae</taxon>
        <taxon>Sinorhizobium/Ensifer group</taxon>
        <taxon>Sinorhizobium</taxon>
    </lineage>
</organism>
<keyword id="KW-0010">Activator</keyword>
<keyword id="KW-0067">ATP-binding</keyword>
<keyword id="KW-0963">Cytoplasm</keyword>
<keyword id="KW-0238">DNA-binding</keyword>
<keyword id="KW-0535">Nitrogen fixation</keyword>
<keyword id="KW-0547">Nucleotide-binding</keyword>
<keyword id="KW-0597">Phosphoprotein</keyword>
<keyword id="KW-1185">Reference proteome</keyword>
<keyword id="KW-0678">Repressor</keyword>
<keyword id="KW-0804">Transcription</keyword>
<keyword id="KW-0805">Transcription regulation</keyword>
<keyword id="KW-0902">Two-component regulatory system</keyword>
<feature type="chain" id="PRO_0000081173" description="DNA-binding transcriptional regulator NtrC">
    <location>
        <begin position="1"/>
        <end position="484"/>
    </location>
</feature>
<feature type="domain" description="Response regulatory" evidence="3">
    <location>
        <begin position="5"/>
        <end position="119"/>
    </location>
</feature>
<feature type="domain" description="Sigma-54 factor interaction" evidence="4">
    <location>
        <begin position="139"/>
        <end position="367"/>
    </location>
</feature>
<feature type="DNA-binding region" description="H-T-H motif" evidence="1">
    <location>
        <begin position="452"/>
        <end position="471"/>
    </location>
</feature>
<feature type="binding site" evidence="4">
    <location>
        <begin position="167"/>
        <end position="174"/>
    </location>
    <ligand>
        <name>ATP</name>
        <dbReference type="ChEBI" id="CHEBI:30616"/>
    </ligand>
</feature>
<feature type="binding site" evidence="4">
    <location>
        <begin position="230"/>
        <end position="239"/>
    </location>
    <ligand>
        <name>ATP</name>
        <dbReference type="ChEBI" id="CHEBI:30616"/>
    </ligand>
</feature>
<feature type="modified residue" description="4-aspartylphosphate" evidence="3">
    <location>
        <position position="54"/>
    </location>
</feature>
<feature type="mutagenesis site" description="In ntrC283; appears to be constitutively active." evidence="5">
    <original>N</original>
    <variation>Y</variation>
    <location>
        <position position="464"/>
    </location>
</feature>
<feature type="sequence conflict" description="In Ref. 1." evidence="6" ref="1">
    <original>SRS</original>
    <variation>L</variation>
    <location>
        <begin position="481"/>
        <end position="483"/>
    </location>
</feature>
<name>NTRC_RHIME</name>
<protein>
    <recommendedName>
        <fullName evidence="2">DNA-binding transcriptional regulator NtrC</fullName>
    </recommendedName>
    <alternativeName>
        <fullName evidence="2">Nitrogen regulation protein NR(I)</fullName>
    </alternativeName>
    <alternativeName>
        <fullName evidence="2">Nitrogen regulator I</fullName>
        <shortName evidence="2">NRI</shortName>
    </alternativeName>
</protein>
<gene>
    <name type="primary">ntrC</name>
    <name type="ordered locus">R01459</name>
    <name type="ORF">SMc01043</name>
</gene>
<proteinExistence type="evidence at protein level"/>
<sequence length="484" mass="53803">MTGATILVADDDAAIRTVLNQALSRAGYDVRITSNAATLWRWIAAGDGDLVVTDVVMPDENAFDLLPRIKKARPDLPVLVMSAQNTFMTAIKASEKGAYDYLPKPFDLTELIGIIGRALAEPKRRPSKLEDDSQDGMPLVGRSAAMQEIYRVLARLMQTDLTLMITGESGTGKELVARALHDYGKRRNGPFVAINMAAIPRDLIESELFGHEKGAFTGAQTRSTGRFEQAEGGTLFLDEIGDMPMDAQTRLLRVLQQGEYTTVGGRTPIRSDVRIVAATNKDLKQSINQGLFREDLYYRLNVVPLRLPPLRDRAEDIPDLVRHFVQQAEKEGLDVKRFDQEALELMKAHPWPGNVRELENLVRRLTALYPQDVITREIIENELRSEIPDSPIEKAAARSGSLSISQAVEENMRQYFASFGDALPPSGLYDRVLAEMEYPLILAALTATRGNQIKAADLLGLNRNTLRKKIRELGVSVYRSSRSA</sequence>